<accession>Q93077</accession>
<accession>B2R4F7</accession>
<accession>O00775</accession>
<accession>O00776</accession>
<accession>O00777</accession>
<accession>O00778</accession>
<accession>Q540R1</accession>
<comment type="function">
    <text>Core component of nucleosome. Nucleosomes wrap and compact DNA into chromatin, limiting DNA accessibility to the cellular machineries which require DNA as a template. Histones thereby play a central role in transcription regulation, DNA repair, DNA replication and chromosomal stability. DNA accessibility is regulated via a complex set of post-translational modifications of histones, also called histone code, and nucleosome remodeling.</text>
</comment>
<comment type="subunit">
    <text>The nucleosome is a histone octamer containing two molecules each of H2A, H2B, H3 and H4 assembled in one H3-H4 heterotetramer and two H2A-H2B heterodimers. The octamer wraps approximately 147 bp of DNA.</text>
</comment>
<comment type="interaction">
    <interactant intactId="EBI-725259">
        <id>Q93077</id>
    </interactant>
    <interactant intactId="EBI-10988864">
        <id>P46379-2</id>
        <label>BAG6</label>
    </interactant>
    <organismsDiffer>false</organismsDiffer>
    <experiments>3</experiments>
</comment>
<comment type="interaction">
    <interactant intactId="EBI-725259">
        <id>Q93077</id>
    </interactant>
    <interactant intactId="EBI-948266">
        <id>O14901</id>
        <label>KLF11</label>
    </interactant>
    <organismsDiffer>false</organismsDiffer>
    <experiments>3</experiments>
</comment>
<comment type="subcellular location">
    <subcellularLocation>
        <location>Nucleus</location>
    </subcellularLocation>
    <subcellularLocation>
        <location>Chromosome</location>
    </subcellularLocation>
</comment>
<comment type="PTM">
    <text evidence="9">Deiminated on Arg-4 in granulocytes upon calcium entry.</text>
</comment>
<comment type="PTM">
    <text evidence="8 10 12 13 14 15 16 19 20 22 24 25">Monoubiquitination of Lys-120 (H2AK119Ub) by RING1, TRIM37 and RNF2/RING2 complex gives a specific tag for epigenetic transcriptional repression and participates in X chromosome inactivation of female mammals. It is involved in the initiation of both imprinted and random X inactivation. Ubiquitinated H2A is enriched in inactive X chromosome chromatin. Ubiquitination of H2A functions downstream of methylation of 'Lys-27' of histone H3 (H3K27me). H2AK119Ub by RNF2/RING2 can also be induced by ultraviolet and may be involved in DNA repair. Monoubiquitination of Lys-120 (H2AK119Ub) by TRIM37 may promote transformation of cells in a number of breast cancers (PubMed:25470042). Following DNA double-strand breaks (DSBs), it is ubiquitinated through 'Lys-63' linkage of ubiquitin moieties by the E2 ligase UBE2N and the E3 ligases RNF8 and RNF168, leading to the recruitment of repair proteins to sites of DNA damage. Ubiquitination at Lys-14 and Lys-16 (H2AK13Ub and H2AK15Ub, respectively) in response to DNA damage is initiated by RNF168 that mediates monoubiquitination at these 2 sites, and 'Lys-63'-linked ubiquitin are then conjugated to monoubiquitin; RNF8 is able to extend 'Lys-63'-linked ubiquitin chains in vitro. Deubiquitinated by USP51 at Lys-14 and Lys-16 (H2AK13Ub and H2AK15Ub, respectively) after damaged DNA is repaired (PubMed:27083998). H2AK119Ub and ionizing radiation-induced 'Lys-63'-linked ubiquitination (H2AK13Ub and H2AK15Ub) are distinct events.</text>
</comment>
<comment type="PTM">
    <text evidence="6 7 9 11 21">Phosphorylation on Ser-2 (H2AS1ph) is enhanced during mitosis. Phosphorylation on Ser-2 by RPS6KA5/MSK1 directly represses transcription. Acetylation of H3 inhibits Ser-2 phosphorylation by RPS6KA5/MSK1. Phosphorylation at Thr-121 (H2AT120ph) by DCAF1 is present in the regulatory region of many tumor suppresor genes and down-regulates their transcription.</text>
</comment>
<comment type="PTM">
    <text evidence="22">Glutamine methylation at Gln-105 (H2AQ104me) by FBL is specifically dedicated to polymerase I. It is present at 35S ribosomal DNA locus and impairs binding of the FACT complex (PubMed:24352239).</text>
</comment>
<comment type="PTM">
    <text evidence="4">Symmetric dimethylation on Arg-4 by the PRDM1/PRMT5 complex may play a crucial role in the germ-cell lineage.</text>
</comment>
<comment type="PTM">
    <text evidence="17">Crotonylation (Kcr) is specifically present in male germ cells and marks testis-specific genes in post-meiotic cells, including X-linked genes that escape sex chromosome inactivation in haploid cells. Crotonylation marks active promoters and enhancers and confers resistance to transcriptional repressors. It is also associated with post-meiotically activated genes on autosomes.</text>
</comment>
<comment type="PTM">
    <text evidence="2">Lactylated in macrophages by EP300/P300 by using lactoyl-CoA directly derived from endogenous or exogenous lactate, leading to stimulates gene transcription.</text>
</comment>
<comment type="mass spectrometry">
    <text>Monoisotopic with N-acetylserine.</text>
</comment>
<comment type="similarity">
    <text evidence="28">Belongs to the histone H2A family.</text>
</comment>
<gene>
    <name evidence="29" type="primary">H2AC6</name>
    <name type="synonym">H2AFL</name>
    <name evidence="29" type="synonym">HIST1H2AC</name>
</gene>
<proteinExistence type="evidence at protein level"/>
<protein>
    <recommendedName>
        <fullName>Histone H2A type 1-C</fullName>
    </recommendedName>
    <alternativeName>
        <fullName evidence="29">H2A-clustered histone 6</fullName>
    </alternativeName>
    <alternativeName>
        <fullName>Histone H2A/l</fullName>
    </alternativeName>
</protein>
<dbReference type="EMBL" id="U90551">
    <property type="protein sequence ID" value="AAB53429.1"/>
    <property type="molecule type" value="mRNA"/>
</dbReference>
<dbReference type="EMBL" id="U91328">
    <property type="protein sequence ID" value="AAB82086.1"/>
    <property type="molecule type" value="Genomic_DNA"/>
</dbReference>
<dbReference type="EMBL" id="Z80778">
    <property type="protein sequence ID" value="CAB02540.1"/>
    <property type="molecule type" value="Genomic_DNA"/>
</dbReference>
<dbReference type="EMBL" id="AY131984">
    <property type="protein sequence ID" value="AAN59965.1"/>
    <property type="molecule type" value="Genomic_DNA"/>
</dbReference>
<dbReference type="EMBL" id="AK311811">
    <property type="protein sequence ID" value="BAG34754.1"/>
    <property type="molecule type" value="mRNA"/>
</dbReference>
<dbReference type="EMBL" id="CH471087">
    <property type="protein sequence ID" value="EAW55532.1"/>
    <property type="molecule type" value="Genomic_DNA"/>
</dbReference>
<dbReference type="CCDS" id="CCDS4585.1"/>
<dbReference type="RefSeq" id="NP_003503.1">
    <property type="nucleotide sequence ID" value="NM_003512.4"/>
</dbReference>
<dbReference type="PDB" id="6C0W">
    <property type="method" value="EM"/>
    <property type="resolution" value="4.00 A"/>
    <property type="chains" value="C/G=1-130"/>
</dbReference>
<dbReference type="PDB" id="6MUO">
    <property type="method" value="EM"/>
    <property type="resolution" value="3.60 A"/>
    <property type="chains" value="C/G=14-118"/>
</dbReference>
<dbReference type="PDB" id="6MUP">
    <property type="method" value="EM"/>
    <property type="resolution" value="3.50 A"/>
    <property type="chains" value="C/G=14-118"/>
</dbReference>
<dbReference type="PDB" id="6UPK">
    <property type="method" value="EM"/>
    <property type="resolution" value="4.90 A"/>
    <property type="chains" value="C=1-130"/>
</dbReference>
<dbReference type="PDB" id="6UPL">
    <property type="method" value="EM"/>
    <property type="resolution" value="7.40 A"/>
    <property type="chains" value="C/K=1-130"/>
</dbReference>
<dbReference type="PDB" id="7A08">
    <property type="method" value="EM"/>
    <property type="resolution" value="3.11 A"/>
    <property type="chains" value="b/f=2-130"/>
</dbReference>
<dbReference type="PDB" id="7PII">
    <property type="method" value="EM"/>
    <property type="resolution" value="2.68 A"/>
    <property type="chains" value="C/G=1-130"/>
</dbReference>
<dbReference type="PDB" id="7R5R">
    <property type="method" value="EM"/>
    <property type="resolution" value="2.44 A"/>
    <property type="chains" value="C/G=1-130"/>
</dbReference>
<dbReference type="PDB" id="7U46">
    <property type="method" value="EM"/>
    <property type="resolution" value="2.68 A"/>
    <property type="chains" value="C/G=1-130"/>
</dbReference>
<dbReference type="PDB" id="7U47">
    <property type="method" value="EM"/>
    <property type="resolution" value="7.50 A"/>
    <property type="chains" value="C/G/N/R=1-130"/>
</dbReference>
<dbReference type="PDB" id="7U4D">
    <property type="method" value="EM"/>
    <property type="resolution" value="8.10 A"/>
    <property type="chains" value="C/G/N/R=1-130"/>
</dbReference>
<dbReference type="PDB" id="7Y8R">
    <property type="method" value="EM"/>
    <property type="resolution" value="4.40 A"/>
    <property type="chains" value="C/G=2-130"/>
</dbReference>
<dbReference type="PDB" id="7YWX">
    <property type="method" value="EM"/>
    <property type="resolution" value="12.00 A"/>
    <property type="chains" value="C/G=1-130"/>
</dbReference>
<dbReference type="PDB" id="7YYH">
    <property type="method" value="EM"/>
    <property type="resolution" value="8.90 A"/>
    <property type="chains" value="C/G=1-130"/>
</dbReference>
<dbReference type="PDB" id="8OO7">
    <property type="method" value="EM"/>
    <property type="resolution" value="2.80 A"/>
    <property type="chains" value="O=2-130"/>
</dbReference>
<dbReference type="PDB" id="8OOA">
    <property type="method" value="EM"/>
    <property type="resolution" value="3.18 A"/>
    <property type="chains" value="O=2-130"/>
</dbReference>
<dbReference type="PDB" id="8OOP">
    <property type="method" value="EM"/>
    <property type="resolution" value="2.70 A"/>
    <property type="chains" value="O=2-130"/>
</dbReference>
<dbReference type="PDB" id="8OOS">
    <property type="method" value="EM"/>
    <property type="resolution" value="3.29 A"/>
    <property type="chains" value="O=2-130"/>
</dbReference>
<dbReference type="PDB" id="8OX0">
    <property type="method" value="EM"/>
    <property type="resolution" value="2.52 A"/>
    <property type="chains" value="C/G=1-130"/>
</dbReference>
<dbReference type="PDB" id="8OX1">
    <property type="method" value="EM"/>
    <property type="resolution" value="2.70 A"/>
    <property type="chains" value="C/G=1-130"/>
</dbReference>
<dbReference type="PDB" id="8X15">
    <property type="method" value="EM"/>
    <property type="resolution" value="3.20 A"/>
    <property type="chains" value="A/E=1-130"/>
</dbReference>
<dbReference type="PDB" id="8X19">
    <property type="method" value="EM"/>
    <property type="resolution" value="3.20 A"/>
    <property type="chains" value="A/E=1-130"/>
</dbReference>
<dbReference type="PDB" id="8X1C">
    <property type="method" value="EM"/>
    <property type="resolution" value="3.20 A"/>
    <property type="chains" value="A/E=1-130"/>
</dbReference>
<dbReference type="PDB" id="9EOZ">
    <property type="method" value="EM"/>
    <property type="resolution" value="3.10 A"/>
    <property type="chains" value="G/L=2-130"/>
</dbReference>
<dbReference type="PDBsum" id="6C0W"/>
<dbReference type="PDBsum" id="6MUO"/>
<dbReference type="PDBsum" id="6MUP"/>
<dbReference type="PDBsum" id="6UPK"/>
<dbReference type="PDBsum" id="6UPL"/>
<dbReference type="PDBsum" id="7A08"/>
<dbReference type="PDBsum" id="7PII"/>
<dbReference type="PDBsum" id="7R5R"/>
<dbReference type="PDBsum" id="7U46"/>
<dbReference type="PDBsum" id="7U47"/>
<dbReference type="PDBsum" id="7U4D"/>
<dbReference type="PDBsum" id="7Y8R"/>
<dbReference type="PDBsum" id="7YWX"/>
<dbReference type="PDBsum" id="7YYH"/>
<dbReference type="PDBsum" id="8OO7"/>
<dbReference type="PDBsum" id="8OOA"/>
<dbReference type="PDBsum" id="8OOP"/>
<dbReference type="PDBsum" id="8OOS"/>
<dbReference type="PDBsum" id="8OX0"/>
<dbReference type="PDBsum" id="8OX1"/>
<dbReference type="PDBsum" id="8X15"/>
<dbReference type="PDBsum" id="8X19"/>
<dbReference type="PDBsum" id="8X1C"/>
<dbReference type="PDBsum" id="9EOZ"/>
<dbReference type="EMDB" id="EMD-11601"/>
<dbReference type="EMDB" id="EMD-13437"/>
<dbReference type="EMDB" id="EMD-14334"/>
<dbReference type="EMDB" id="EMD-14351"/>
<dbReference type="EMDB" id="EMD-14375"/>
<dbReference type="EMDB" id="EMD-17006"/>
<dbReference type="EMDB" id="EMD-17008"/>
<dbReference type="EMDB" id="EMD-17025"/>
<dbReference type="EMDB" id="EMD-17027"/>
<dbReference type="EMDB" id="EMD-17251"/>
<dbReference type="EMDB" id="EMD-17252"/>
<dbReference type="EMDB" id="EMD-17253"/>
<dbReference type="EMDB" id="EMD-19870"/>
<dbReference type="EMDB" id="EMD-20840"/>
<dbReference type="EMDB" id="EMD-20841"/>
<dbReference type="EMDB" id="EMD-26330"/>
<dbReference type="EMDB" id="EMD-26331"/>
<dbReference type="EMDB" id="EMD-26332"/>
<dbReference type="EMDB" id="EMD-33684"/>
<dbReference type="EMDB" id="EMD-37984"/>
<dbReference type="EMDB" id="EMD-37988"/>
<dbReference type="EMDB" id="EMD-37990"/>
<dbReference type="EMDB" id="EMD-7326"/>
<dbReference type="EMDB" id="EMD-9250"/>
<dbReference type="EMDB" id="EMD-9251"/>
<dbReference type="SMR" id="Q93077"/>
<dbReference type="BioGRID" id="113930">
    <property type="interactions" value="110"/>
</dbReference>
<dbReference type="ComplexPortal" id="CPX-25755">
    <property type="entry name" value="Hexasome complex"/>
</dbReference>
<dbReference type="FunCoup" id="Q93077">
    <property type="interactions" value="999"/>
</dbReference>
<dbReference type="IntAct" id="Q93077">
    <property type="interactions" value="37"/>
</dbReference>
<dbReference type="MINT" id="Q93077"/>
<dbReference type="STRING" id="9606.ENSP00000367022"/>
<dbReference type="GlyGen" id="Q93077">
    <property type="glycosylation" value="1 site, 1 O-linked glycan (1 site)"/>
</dbReference>
<dbReference type="iPTMnet" id="Q93077"/>
<dbReference type="PhosphoSitePlus" id="Q93077"/>
<dbReference type="SwissPalm" id="Q93077"/>
<dbReference type="BioMuta" id="HIST1H2AC"/>
<dbReference type="DMDM" id="12643341"/>
<dbReference type="jPOST" id="Q93077"/>
<dbReference type="MassIVE" id="Q93077"/>
<dbReference type="PaxDb" id="9606-ENSP00000367022"/>
<dbReference type="PeptideAtlas" id="Q93077"/>
<dbReference type="PRIDE" id="Q93077"/>
<dbReference type="Pumba" id="Q93077"/>
<dbReference type="TopDownProteomics" id="Q93077"/>
<dbReference type="Antibodypedia" id="25541">
    <property type="antibodies" value="45 antibodies from 17 providers"/>
</dbReference>
<dbReference type="DNASU" id="8334"/>
<dbReference type="Ensembl" id="ENST00000314088.6">
    <property type="protein sequence ID" value="ENSP00000321389.5"/>
    <property type="gene ID" value="ENSG00000180573.10"/>
</dbReference>
<dbReference type="Ensembl" id="ENST00000377791.4">
    <property type="protein sequence ID" value="ENSP00000367022.2"/>
    <property type="gene ID" value="ENSG00000180573.10"/>
</dbReference>
<dbReference type="Ensembl" id="ENST00000602637.1">
    <property type="protein sequence ID" value="ENSP00000473534.1"/>
    <property type="gene ID" value="ENSG00000180573.10"/>
</dbReference>
<dbReference type="GeneID" id="8334"/>
<dbReference type="KEGG" id="hsa:8334"/>
<dbReference type="MANE-Select" id="ENST00000377791.4">
    <property type="protein sequence ID" value="ENSP00000367022.2"/>
    <property type="RefSeq nucleotide sequence ID" value="NM_003512.4"/>
    <property type="RefSeq protein sequence ID" value="NP_003503.1"/>
</dbReference>
<dbReference type="UCSC" id="uc003ngm.4">
    <property type="organism name" value="human"/>
</dbReference>
<dbReference type="AGR" id="HGNC:4733"/>
<dbReference type="CTD" id="8334"/>
<dbReference type="DisGeNET" id="8334"/>
<dbReference type="GeneCards" id="H2AC6"/>
<dbReference type="HGNC" id="HGNC:4733">
    <property type="gene designation" value="H2AC6"/>
</dbReference>
<dbReference type="HPA" id="ENSG00000180573">
    <property type="expression patterns" value="Low tissue specificity"/>
</dbReference>
<dbReference type="MalaCards" id="H2AC6"/>
<dbReference type="MIM" id="602794">
    <property type="type" value="gene"/>
</dbReference>
<dbReference type="neXtProt" id="NX_Q93077"/>
<dbReference type="OpenTargets" id="ENSG00000180573"/>
<dbReference type="VEuPathDB" id="HostDB:ENSG00000180573"/>
<dbReference type="eggNOG" id="KOG1756">
    <property type="taxonomic scope" value="Eukaryota"/>
</dbReference>
<dbReference type="GeneTree" id="ENSGT00940000153092"/>
<dbReference type="HOGENOM" id="CLU_062828_3_1_1"/>
<dbReference type="InParanoid" id="Q93077"/>
<dbReference type="OMA" id="YWARRTA"/>
<dbReference type="OrthoDB" id="9829024at2759"/>
<dbReference type="PAN-GO" id="Q93077">
    <property type="GO annotations" value="1 GO annotation based on evolutionary models"/>
</dbReference>
<dbReference type="PhylomeDB" id="Q93077"/>
<dbReference type="TreeFam" id="TF300137"/>
<dbReference type="PathwayCommons" id="Q93077"/>
<dbReference type="Reactome" id="R-HSA-110328">
    <property type="pathway name" value="Recognition and association of DNA glycosylase with site containing an affected pyrimidine"/>
</dbReference>
<dbReference type="Reactome" id="R-HSA-110329">
    <property type="pathway name" value="Cleavage of the damaged pyrimidine"/>
</dbReference>
<dbReference type="Reactome" id="R-HSA-110330">
    <property type="pathway name" value="Recognition and association of DNA glycosylase with site containing an affected purine"/>
</dbReference>
<dbReference type="Reactome" id="R-HSA-110331">
    <property type="pathway name" value="Cleavage of the damaged purine"/>
</dbReference>
<dbReference type="Reactome" id="R-HSA-1221632">
    <property type="pathway name" value="Meiotic synapsis"/>
</dbReference>
<dbReference type="Reactome" id="R-HSA-171306">
    <property type="pathway name" value="Packaging Of Telomere Ends"/>
</dbReference>
<dbReference type="Reactome" id="R-HSA-1912408">
    <property type="pathway name" value="Pre-NOTCH Transcription and Translation"/>
</dbReference>
<dbReference type="Reactome" id="R-HSA-201722">
    <property type="pathway name" value="Formation of the beta-catenin:TCF transactivating complex"/>
</dbReference>
<dbReference type="Reactome" id="R-HSA-212300">
    <property type="pathway name" value="PRC2 methylates histones and DNA"/>
</dbReference>
<dbReference type="Reactome" id="R-HSA-2299718">
    <property type="pathway name" value="Condensation of Prophase Chromosomes"/>
</dbReference>
<dbReference type="Reactome" id="R-HSA-2559580">
    <property type="pathway name" value="Oxidative Stress Induced Senescence"/>
</dbReference>
<dbReference type="Reactome" id="R-HSA-2559582">
    <property type="pathway name" value="Senescence-Associated Secretory Phenotype (SASP)"/>
</dbReference>
<dbReference type="Reactome" id="R-HSA-2559586">
    <property type="pathway name" value="DNA Damage/Telomere Stress Induced Senescence"/>
</dbReference>
<dbReference type="Reactome" id="R-HSA-3214815">
    <property type="pathway name" value="HDACs deacetylate histones"/>
</dbReference>
<dbReference type="Reactome" id="R-HSA-3214847">
    <property type="pathway name" value="HATs acetylate histones"/>
</dbReference>
<dbReference type="Reactome" id="R-HSA-3214858">
    <property type="pathway name" value="RMTs methylate histone arginines"/>
</dbReference>
<dbReference type="Reactome" id="R-HSA-427359">
    <property type="pathway name" value="SIRT1 negatively regulates rRNA expression"/>
</dbReference>
<dbReference type="Reactome" id="R-HSA-427389">
    <property type="pathway name" value="ERCC6 (CSB) and EHMT2 (G9a) positively regulate rRNA expression"/>
</dbReference>
<dbReference type="Reactome" id="R-HSA-427413">
    <property type="pathway name" value="NoRC negatively regulates rRNA expression"/>
</dbReference>
<dbReference type="Reactome" id="R-HSA-5250924">
    <property type="pathway name" value="B-WICH complex positively regulates rRNA expression"/>
</dbReference>
<dbReference type="Reactome" id="R-HSA-5334118">
    <property type="pathway name" value="DNA methylation"/>
</dbReference>
<dbReference type="Reactome" id="R-HSA-5578749">
    <property type="pathway name" value="Transcriptional regulation by small RNAs"/>
</dbReference>
<dbReference type="Reactome" id="R-HSA-5617472">
    <property type="pathway name" value="Activation of anterior HOX genes in hindbrain development during early embryogenesis"/>
</dbReference>
<dbReference type="Reactome" id="R-HSA-5625886">
    <property type="pathway name" value="Activated PKN1 stimulates transcription of AR (androgen receptor) regulated genes KLK2 and KLK3"/>
</dbReference>
<dbReference type="Reactome" id="R-HSA-5689603">
    <property type="pathway name" value="UCH proteinases"/>
</dbReference>
<dbReference type="Reactome" id="R-HSA-5689880">
    <property type="pathway name" value="Ub-specific processing proteases"/>
</dbReference>
<dbReference type="Reactome" id="R-HSA-5689901">
    <property type="pathway name" value="Metalloprotease DUBs"/>
</dbReference>
<dbReference type="Reactome" id="R-HSA-606279">
    <property type="pathway name" value="Deposition of new CENPA-containing nucleosomes at the centromere"/>
</dbReference>
<dbReference type="Reactome" id="R-HSA-68616">
    <property type="pathway name" value="Assembly of the ORC complex at the origin of replication"/>
</dbReference>
<dbReference type="Reactome" id="R-HSA-73728">
    <property type="pathway name" value="RNA Polymerase I Promoter Opening"/>
</dbReference>
<dbReference type="Reactome" id="R-HSA-73772">
    <property type="pathway name" value="RNA Polymerase I Promoter Escape"/>
</dbReference>
<dbReference type="Reactome" id="R-HSA-8936459">
    <property type="pathway name" value="RUNX1 regulates genes involved in megakaryocyte differentiation and platelet function"/>
</dbReference>
<dbReference type="Reactome" id="R-HSA-8939236">
    <property type="pathway name" value="RUNX1 regulates transcription of genes involved in differentiation of HSCs"/>
</dbReference>
<dbReference type="Reactome" id="R-HSA-9018519">
    <property type="pathway name" value="Estrogen-dependent gene expression"/>
</dbReference>
<dbReference type="Reactome" id="R-HSA-912446">
    <property type="pathway name" value="Meiotic recombination"/>
</dbReference>
<dbReference type="Reactome" id="R-HSA-9609690">
    <property type="pathway name" value="HCMV Early Events"/>
</dbReference>
<dbReference type="Reactome" id="R-HSA-9610379">
    <property type="pathway name" value="HCMV Late Events"/>
</dbReference>
<dbReference type="Reactome" id="R-HSA-9616222">
    <property type="pathway name" value="Transcriptional regulation of granulopoiesis"/>
</dbReference>
<dbReference type="Reactome" id="R-HSA-9670095">
    <property type="pathway name" value="Inhibition of DNA recombination at telomere"/>
</dbReference>
<dbReference type="Reactome" id="R-HSA-9710421">
    <property type="pathway name" value="Defective pyroptosis"/>
</dbReference>
<dbReference type="Reactome" id="R-HSA-977225">
    <property type="pathway name" value="Amyloid fiber formation"/>
</dbReference>
<dbReference type="Reactome" id="R-HSA-9821002">
    <property type="pathway name" value="Chromatin modifications during the maternal to zygotic transition (MZT)"/>
</dbReference>
<dbReference type="Reactome" id="R-HSA-9841922">
    <property type="pathway name" value="MLL4 and MLL3 complexes regulate expression of PPARG target genes in adipogenesis and hepatic steatosis"/>
</dbReference>
<dbReference type="Reactome" id="R-HSA-9843940">
    <property type="pathway name" value="Regulation of endogenous retroelements by KRAB-ZFP proteins"/>
</dbReference>
<dbReference type="Reactome" id="R-HSA-9843970">
    <property type="pathway name" value="Regulation of endogenous retroelements by the Human Silencing Hub (HUSH) complex"/>
</dbReference>
<dbReference type="Reactome" id="R-HSA-9845323">
    <property type="pathway name" value="Regulation of endogenous retroelements by Piwi-interacting RNAs (piRNAs)"/>
</dbReference>
<dbReference type="SignaLink" id="Q93077"/>
<dbReference type="SIGNOR" id="Q93077"/>
<dbReference type="BioGRID-ORCS" id="8334">
    <property type="hits" value="298 hits in 1111 CRISPR screens"/>
</dbReference>
<dbReference type="CD-CODE" id="91857CE7">
    <property type="entry name" value="Nucleolus"/>
</dbReference>
<dbReference type="ChiTaRS" id="HIST1H2AC">
    <property type="organism name" value="human"/>
</dbReference>
<dbReference type="GeneWiki" id="HIST1H2AC"/>
<dbReference type="GenomeRNAi" id="8334"/>
<dbReference type="Pharos" id="Q93077">
    <property type="development level" value="Tdark"/>
</dbReference>
<dbReference type="PRO" id="PR:Q93077"/>
<dbReference type="Proteomes" id="UP000005640">
    <property type="component" value="Chromosome 6"/>
</dbReference>
<dbReference type="RNAct" id="Q93077">
    <property type="molecule type" value="protein"/>
</dbReference>
<dbReference type="Bgee" id="ENSG00000180573">
    <property type="expression patterns" value="Expressed in monocyte and 201 other cell types or tissues"/>
</dbReference>
<dbReference type="ExpressionAtlas" id="Q93077">
    <property type="expression patterns" value="baseline and differential"/>
</dbReference>
<dbReference type="GO" id="GO:0070062">
    <property type="term" value="C:extracellular exosome"/>
    <property type="evidence" value="ECO:0007005"/>
    <property type="project" value="UniProtKB"/>
</dbReference>
<dbReference type="GO" id="GO:0005654">
    <property type="term" value="C:nucleoplasm"/>
    <property type="evidence" value="ECO:0000304"/>
    <property type="project" value="Reactome"/>
</dbReference>
<dbReference type="GO" id="GO:0000786">
    <property type="term" value="C:nucleosome"/>
    <property type="evidence" value="ECO:0000318"/>
    <property type="project" value="GO_Central"/>
</dbReference>
<dbReference type="GO" id="GO:0005634">
    <property type="term" value="C:nucleus"/>
    <property type="evidence" value="ECO:0000314"/>
    <property type="project" value="UniProtKB"/>
</dbReference>
<dbReference type="GO" id="GO:0003677">
    <property type="term" value="F:DNA binding"/>
    <property type="evidence" value="ECO:0007669"/>
    <property type="project" value="UniProtKB-KW"/>
</dbReference>
<dbReference type="GO" id="GO:0046982">
    <property type="term" value="F:protein heterodimerization activity"/>
    <property type="evidence" value="ECO:0007669"/>
    <property type="project" value="InterPro"/>
</dbReference>
<dbReference type="GO" id="GO:0030527">
    <property type="term" value="F:structural constituent of chromatin"/>
    <property type="evidence" value="ECO:0000318"/>
    <property type="project" value="GO_Central"/>
</dbReference>
<dbReference type="GO" id="GO:0031507">
    <property type="term" value="P:heterochromatin formation"/>
    <property type="evidence" value="ECO:0000318"/>
    <property type="project" value="GO_Central"/>
</dbReference>
<dbReference type="GO" id="GO:0008285">
    <property type="term" value="P:negative regulation of cell population proliferation"/>
    <property type="evidence" value="ECO:0000315"/>
    <property type="project" value="UniProtKB"/>
</dbReference>
<dbReference type="CDD" id="cd00074">
    <property type="entry name" value="HFD_H2A"/>
    <property type="match status" value="1"/>
</dbReference>
<dbReference type="FunFam" id="1.10.20.10:FF:000103">
    <property type="entry name" value="Histone H2A type 1"/>
    <property type="match status" value="1"/>
</dbReference>
<dbReference type="Gene3D" id="1.10.20.10">
    <property type="entry name" value="Histone, subunit A"/>
    <property type="match status" value="1"/>
</dbReference>
<dbReference type="InterPro" id="IPR009072">
    <property type="entry name" value="Histone-fold"/>
</dbReference>
<dbReference type="InterPro" id="IPR002119">
    <property type="entry name" value="Histone_H2A"/>
</dbReference>
<dbReference type="InterPro" id="IPR007125">
    <property type="entry name" value="Histone_H2A/H2B/H3"/>
</dbReference>
<dbReference type="InterPro" id="IPR032454">
    <property type="entry name" value="Histone_H2A_C"/>
</dbReference>
<dbReference type="InterPro" id="IPR032458">
    <property type="entry name" value="Histone_H2A_CS"/>
</dbReference>
<dbReference type="PANTHER" id="PTHR23430">
    <property type="entry name" value="HISTONE H2A"/>
    <property type="match status" value="1"/>
</dbReference>
<dbReference type="Pfam" id="PF00125">
    <property type="entry name" value="Histone"/>
    <property type="match status" value="1"/>
</dbReference>
<dbReference type="Pfam" id="PF16211">
    <property type="entry name" value="Histone_H2A_C"/>
    <property type="match status" value="1"/>
</dbReference>
<dbReference type="PRINTS" id="PR00620">
    <property type="entry name" value="HISTONEH2A"/>
</dbReference>
<dbReference type="SMART" id="SM00414">
    <property type="entry name" value="H2A"/>
    <property type="match status" value="1"/>
</dbReference>
<dbReference type="SUPFAM" id="SSF47113">
    <property type="entry name" value="Histone-fold"/>
    <property type="match status" value="1"/>
</dbReference>
<dbReference type="PROSITE" id="PS00046">
    <property type="entry name" value="HISTONE_H2A"/>
    <property type="match status" value="1"/>
</dbReference>
<name>H2A1C_HUMAN</name>
<organism>
    <name type="scientific">Homo sapiens</name>
    <name type="common">Human</name>
    <dbReference type="NCBI Taxonomy" id="9606"/>
    <lineage>
        <taxon>Eukaryota</taxon>
        <taxon>Metazoa</taxon>
        <taxon>Chordata</taxon>
        <taxon>Craniata</taxon>
        <taxon>Vertebrata</taxon>
        <taxon>Euteleostomi</taxon>
        <taxon>Mammalia</taxon>
        <taxon>Eutheria</taxon>
        <taxon>Euarchontoglires</taxon>
        <taxon>Primates</taxon>
        <taxon>Haplorrhini</taxon>
        <taxon>Catarrhini</taxon>
        <taxon>Hominidae</taxon>
        <taxon>Homo</taxon>
    </lineage>
</organism>
<keyword id="KW-0002">3D-structure</keyword>
<keyword id="KW-0007">Acetylation</keyword>
<keyword id="KW-0158">Chromosome</keyword>
<keyword id="KW-0164">Citrullination</keyword>
<keyword id="KW-0238">DNA-binding</keyword>
<keyword id="KW-0379">Hydroxylation</keyword>
<keyword id="KW-1017">Isopeptide bond</keyword>
<keyword id="KW-0488">Methylation</keyword>
<keyword id="KW-0544">Nucleosome core</keyword>
<keyword id="KW-0539">Nucleus</keyword>
<keyword id="KW-0597">Phosphoprotein</keyword>
<keyword id="KW-1185">Reference proteome</keyword>
<keyword id="KW-0832">Ubl conjugation</keyword>
<reference key="1">
    <citation type="journal article" date="1997" name="Genome Res.">
        <title>A 1.1-Mb transcript map of the hereditary hemochromatosis locus.</title>
        <authorList>
            <person name="Ruddy D.A."/>
            <person name="Kronmal G.S."/>
            <person name="Lee V.K."/>
            <person name="Mintier G.A."/>
            <person name="Quintana L."/>
            <person name="Domingo R. Jr."/>
            <person name="Meyer N.C."/>
            <person name="Irrinki A."/>
            <person name="McClelland E.E."/>
            <person name="Fullan A."/>
            <person name="Mapa F.A."/>
            <person name="Moore T."/>
            <person name="Thomas W."/>
            <person name="Loeb D.B."/>
            <person name="Harmon C."/>
            <person name="Tsuchihashi Z."/>
            <person name="Wolff R.K."/>
            <person name="Schatzman R.C."/>
            <person name="Feder J.N."/>
        </authorList>
    </citation>
    <scope>NUCLEOTIDE SEQUENCE [GENOMIC DNA / MRNA]</scope>
</reference>
<reference key="2">
    <citation type="journal article" date="1997" name="Genomics">
        <title>Human histone gene organization: nonregular arrangement within a large cluster.</title>
        <authorList>
            <person name="Albig W."/>
            <person name="Kioschis P."/>
            <person name="Poustka A."/>
            <person name="Meergans K."/>
            <person name="Doenecke D."/>
        </authorList>
    </citation>
    <scope>NUCLEOTIDE SEQUENCE [GENOMIC DNA]</scope>
</reference>
<reference key="3">
    <citation type="journal article" date="2002" name="Genomics">
        <title>The human and mouse replication-dependent histone genes.</title>
        <authorList>
            <person name="Marzluff W.F."/>
            <person name="Gongidi P."/>
            <person name="Woods K.R."/>
            <person name="Jin J."/>
            <person name="Maltais L.J."/>
        </authorList>
    </citation>
    <scope>NUCLEOTIDE SEQUENCE [GENOMIC DNA]</scope>
</reference>
<reference key="4">
    <citation type="journal article" date="2004" name="Nat. Genet.">
        <title>Complete sequencing and characterization of 21,243 full-length human cDNAs.</title>
        <authorList>
            <person name="Ota T."/>
            <person name="Suzuki Y."/>
            <person name="Nishikawa T."/>
            <person name="Otsuki T."/>
            <person name="Sugiyama T."/>
            <person name="Irie R."/>
            <person name="Wakamatsu A."/>
            <person name="Hayashi K."/>
            <person name="Sato H."/>
            <person name="Nagai K."/>
            <person name="Kimura K."/>
            <person name="Makita H."/>
            <person name="Sekine M."/>
            <person name="Obayashi M."/>
            <person name="Nishi T."/>
            <person name="Shibahara T."/>
            <person name="Tanaka T."/>
            <person name="Ishii S."/>
            <person name="Yamamoto J."/>
            <person name="Saito K."/>
            <person name="Kawai Y."/>
            <person name="Isono Y."/>
            <person name="Nakamura Y."/>
            <person name="Nagahari K."/>
            <person name="Murakami K."/>
            <person name="Yasuda T."/>
            <person name="Iwayanagi T."/>
            <person name="Wagatsuma M."/>
            <person name="Shiratori A."/>
            <person name="Sudo H."/>
            <person name="Hosoiri T."/>
            <person name="Kaku Y."/>
            <person name="Kodaira H."/>
            <person name="Kondo H."/>
            <person name="Sugawara M."/>
            <person name="Takahashi M."/>
            <person name="Kanda K."/>
            <person name="Yokoi T."/>
            <person name="Furuya T."/>
            <person name="Kikkawa E."/>
            <person name="Omura Y."/>
            <person name="Abe K."/>
            <person name="Kamihara K."/>
            <person name="Katsuta N."/>
            <person name="Sato K."/>
            <person name="Tanikawa M."/>
            <person name="Yamazaki M."/>
            <person name="Ninomiya K."/>
            <person name="Ishibashi T."/>
            <person name="Yamashita H."/>
            <person name="Murakawa K."/>
            <person name="Fujimori K."/>
            <person name="Tanai H."/>
            <person name="Kimata M."/>
            <person name="Watanabe M."/>
            <person name="Hiraoka S."/>
            <person name="Chiba Y."/>
            <person name="Ishida S."/>
            <person name="Ono Y."/>
            <person name="Takiguchi S."/>
            <person name="Watanabe S."/>
            <person name="Yosida M."/>
            <person name="Hotuta T."/>
            <person name="Kusano J."/>
            <person name="Kanehori K."/>
            <person name="Takahashi-Fujii A."/>
            <person name="Hara H."/>
            <person name="Tanase T.-O."/>
            <person name="Nomura Y."/>
            <person name="Togiya S."/>
            <person name="Komai F."/>
            <person name="Hara R."/>
            <person name="Takeuchi K."/>
            <person name="Arita M."/>
            <person name="Imose N."/>
            <person name="Musashino K."/>
            <person name="Yuuki H."/>
            <person name="Oshima A."/>
            <person name="Sasaki N."/>
            <person name="Aotsuka S."/>
            <person name="Yoshikawa Y."/>
            <person name="Matsunawa H."/>
            <person name="Ichihara T."/>
            <person name="Shiohata N."/>
            <person name="Sano S."/>
            <person name="Moriya S."/>
            <person name="Momiyama H."/>
            <person name="Satoh N."/>
            <person name="Takami S."/>
            <person name="Terashima Y."/>
            <person name="Suzuki O."/>
            <person name="Nakagawa S."/>
            <person name="Senoh A."/>
            <person name="Mizoguchi H."/>
            <person name="Goto Y."/>
            <person name="Shimizu F."/>
            <person name="Wakebe H."/>
            <person name="Hishigaki H."/>
            <person name="Watanabe T."/>
            <person name="Sugiyama A."/>
            <person name="Takemoto M."/>
            <person name="Kawakami B."/>
            <person name="Yamazaki M."/>
            <person name="Watanabe K."/>
            <person name="Kumagai A."/>
            <person name="Itakura S."/>
            <person name="Fukuzumi Y."/>
            <person name="Fujimori Y."/>
            <person name="Komiyama M."/>
            <person name="Tashiro H."/>
            <person name="Tanigami A."/>
            <person name="Fujiwara T."/>
            <person name="Ono T."/>
            <person name="Yamada K."/>
            <person name="Fujii Y."/>
            <person name="Ozaki K."/>
            <person name="Hirao M."/>
            <person name="Ohmori Y."/>
            <person name="Kawabata A."/>
            <person name="Hikiji T."/>
            <person name="Kobatake N."/>
            <person name="Inagaki H."/>
            <person name="Ikema Y."/>
            <person name="Okamoto S."/>
            <person name="Okitani R."/>
            <person name="Kawakami T."/>
            <person name="Noguchi S."/>
            <person name="Itoh T."/>
            <person name="Shigeta K."/>
            <person name="Senba T."/>
            <person name="Matsumura K."/>
            <person name="Nakajima Y."/>
            <person name="Mizuno T."/>
            <person name="Morinaga M."/>
            <person name="Sasaki M."/>
            <person name="Togashi T."/>
            <person name="Oyama M."/>
            <person name="Hata H."/>
            <person name="Watanabe M."/>
            <person name="Komatsu T."/>
            <person name="Mizushima-Sugano J."/>
            <person name="Satoh T."/>
            <person name="Shirai Y."/>
            <person name="Takahashi Y."/>
            <person name="Nakagawa K."/>
            <person name="Okumura K."/>
            <person name="Nagase T."/>
            <person name="Nomura N."/>
            <person name="Kikuchi H."/>
            <person name="Masuho Y."/>
            <person name="Yamashita R."/>
            <person name="Nakai K."/>
            <person name="Yada T."/>
            <person name="Nakamura Y."/>
            <person name="Ohara O."/>
            <person name="Isogai T."/>
            <person name="Sugano S."/>
        </authorList>
    </citation>
    <scope>NUCLEOTIDE SEQUENCE [LARGE SCALE MRNA]</scope>
    <source>
        <tissue>Trachea</tissue>
    </source>
</reference>
<reference key="5">
    <citation type="submission" date="2005-07" db="EMBL/GenBank/DDBJ databases">
        <authorList>
            <person name="Mural R.J."/>
            <person name="Istrail S."/>
            <person name="Sutton G.G."/>
            <person name="Florea L."/>
            <person name="Halpern A.L."/>
            <person name="Mobarry C.M."/>
            <person name="Lippert R."/>
            <person name="Walenz B."/>
            <person name="Shatkay H."/>
            <person name="Dew I."/>
            <person name="Miller J.R."/>
            <person name="Flanigan M.J."/>
            <person name="Edwards N.J."/>
            <person name="Bolanos R."/>
            <person name="Fasulo D."/>
            <person name="Halldorsson B.V."/>
            <person name="Hannenhalli S."/>
            <person name="Turner R."/>
            <person name="Yooseph S."/>
            <person name="Lu F."/>
            <person name="Nusskern D.R."/>
            <person name="Shue B.C."/>
            <person name="Zheng X.H."/>
            <person name="Zhong F."/>
            <person name="Delcher A.L."/>
            <person name="Huson D.H."/>
            <person name="Kravitz S.A."/>
            <person name="Mouchard L."/>
            <person name="Reinert K."/>
            <person name="Remington K.A."/>
            <person name="Clark A.G."/>
            <person name="Waterman M.S."/>
            <person name="Eichler E.E."/>
            <person name="Adams M.D."/>
            <person name="Hunkapiller M.W."/>
            <person name="Myers E.W."/>
            <person name="Venter J.C."/>
        </authorList>
    </citation>
    <scope>NUCLEOTIDE SEQUENCE [LARGE SCALE GENOMIC DNA]</scope>
</reference>
<reference key="6">
    <citation type="journal article" date="2004" name="Genes Dev.">
        <title>Nucleosomal histone kinase-1 phosphorylates H2A Thr 119 during mitosis in the early Drosophila embryo.</title>
        <authorList>
            <person name="Aihara H."/>
            <person name="Nakagawa T."/>
            <person name="Yasui K."/>
            <person name="Ohta T."/>
            <person name="Hirose S."/>
            <person name="Dhomae N."/>
            <person name="Takio K."/>
            <person name="Kaneko M."/>
            <person name="Takeshima Y."/>
            <person name="Muramatsu M."/>
            <person name="Ito T."/>
        </authorList>
    </citation>
    <scope>PHOSPHORYLATION AT THR-121</scope>
</reference>
<reference key="7">
    <citation type="journal article" date="2004" name="J. Biol. Chem.">
        <title>Phosphorylation of histone H2A inhibits transcription on chromatin templates.</title>
        <authorList>
            <person name="Zhang Y."/>
            <person name="Griffin K."/>
            <person name="Mondal N."/>
            <person name="Parvin J.D."/>
        </authorList>
    </citation>
    <scope>PHOSPHORYLATION AT SER-2</scope>
    <scope>MUTAGENESIS OF SER-2</scope>
</reference>
<reference key="8">
    <citation type="journal article" date="2004" name="Nature">
        <title>Role of histone H2A ubiquitination in Polycomb silencing.</title>
        <authorList>
            <person name="Wang H."/>
            <person name="Wang L."/>
            <person name="Erdjument-Bromage H."/>
            <person name="Vidal M."/>
            <person name="Tempst P."/>
            <person name="Jones R.S."/>
            <person name="Zhang Y."/>
        </authorList>
    </citation>
    <scope>UBIQUITINATION AT LYS-120</scope>
</reference>
<reference key="9">
    <citation type="journal article" date="2005" name="Biochemistry">
        <title>Deimination of histone H2A and H4 at arginine 3 in HL-60 granulocytes.</title>
        <authorList>
            <person name="Hagiwara T."/>
            <person name="Hidaka Y."/>
            <person name="Yamada M."/>
        </authorList>
    </citation>
    <scope>ACETYLATION AT SER-2</scope>
    <scope>CITRULLINATION AT ARG-4</scope>
    <scope>IDENTIFICATION BY MASS SPECTROMETRY</scope>
</reference>
<reference key="10">
    <citation type="journal article" date="2005" name="Mol. Cell">
        <title>Role of Bmi-1 and Ring1A in H2A ubiquitylation and Hox gene silencing.</title>
        <authorList>
            <person name="Cao R."/>
            <person name="Tsukada Y."/>
            <person name="Zhang Y."/>
        </authorList>
    </citation>
    <scope>UBIQUITINATION AT LYS-120</scope>
</reference>
<reference key="11">
    <citation type="journal article" date="2006" name="Genes Dev.">
        <title>DNA damage triggers nucleotide excision repair-dependent monoubiquitylation of histone H2A.</title>
        <authorList>
            <person name="Bergink S."/>
            <person name="Salomons F.A."/>
            <person name="Hoogstraten D."/>
            <person name="Groothuis T.A.M."/>
            <person name="de Waard H."/>
            <person name="Wu J."/>
            <person name="Yuan L."/>
            <person name="Citterio E."/>
            <person name="Houtsmuller A.B."/>
            <person name="Neefjes J."/>
            <person name="Hoeijmakers J.H.J."/>
            <person name="Vermeulen W."/>
            <person name="Dantuma N.P."/>
        </authorList>
    </citation>
    <scope>UBIQUITINATION AT LYS-120</scope>
</reference>
<reference key="12">
    <citation type="journal article" date="2006" name="J. Proteome Res.">
        <title>Precise characterization of human histones in the H2A gene family by top down mass spectrometry.</title>
        <authorList>
            <person name="Boyne M.T. II"/>
            <person name="Pesavento J.J."/>
            <person name="Mizzen C.A."/>
            <person name="Kelleher N.L."/>
        </authorList>
    </citation>
    <scope>MASS SPECTROMETRY</scope>
    <scope>ACETYLATION AT SER-2</scope>
</reference>
<reference key="13">
    <citation type="journal article" date="2007" name="Cell">
        <title>RNF8 ubiquitylates histones at DNA double-strand breaks and promotes assembly of repair proteins.</title>
        <authorList>
            <person name="Mailand N."/>
            <person name="Bekker-Jensen S."/>
            <person name="Faustrup H."/>
            <person name="Melander F."/>
            <person name="Bartek J."/>
            <person name="Lukas C."/>
            <person name="Lukas J."/>
        </authorList>
    </citation>
    <scope>UBIQUITINATION</scope>
</reference>
<reference key="14">
    <citation type="journal article" date="2007" name="Cell">
        <title>RNF8 transduces the DNA-damage signal via histone ubiquitylation and checkpoint protein assembly.</title>
        <authorList>
            <person name="Huen M.S.Y."/>
            <person name="Grant R."/>
            <person name="Manke I."/>
            <person name="Minn K."/>
            <person name="Yu X."/>
            <person name="Yaffe M.B."/>
            <person name="Chen J."/>
        </authorList>
    </citation>
    <scope>UBIQUITINATION</scope>
</reference>
<reference key="15">
    <citation type="journal article" date="2009" name="Cell">
        <title>The RIDDLE syndrome protein mediates a ubiquitin-dependent signaling cascade at sites of DNA damage.</title>
        <authorList>
            <person name="Stewart G.S."/>
            <person name="Panier S."/>
            <person name="Townsend K."/>
            <person name="Al-Hakim A.K."/>
            <person name="Kolas N.K."/>
            <person name="Miller E.S."/>
            <person name="Nakada S."/>
            <person name="Ylanko J."/>
            <person name="Olivarius S."/>
            <person name="Mendez M."/>
            <person name="Oldreive C."/>
            <person name="Wildenhain J."/>
            <person name="Tagliaferro A."/>
            <person name="Pelletier L."/>
            <person name="Taubenheim N."/>
            <person name="Durandy A."/>
            <person name="Byrd P.J."/>
            <person name="Stankovic T."/>
            <person name="Taylor A.M.R."/>
            <person name="Durocher D."/>
        </authorList>
    </citation>
    <scope>UBIQUITINATION</scope>
</reference>
<reference key="16">
    <citation type="journal article" date="2009" name="Cell">
        <title>RNF168 binds and amplifies ubiquitin conjugates on damaged chromosomes to allow accumulation of repair proteins.</title>
        <authorList>
            <person name="Doil C."/>
            <person name="Mailand N."/>
            <person name="Bekker-Jensen S."/>
            <person name="Menard P."/>
            <person name="Larsen D.H."/>
            <person name="Pepperkok R."/>
            <person name="Ellenberg J."/>
            <person name="Panier S."/>
            <person name="Durocher D."/>
            <person name="Bartek J."/>
            <person name="Lukas J."/>
            <person name="Lukas C."/>
        </authorList>
    </citation>
    <scope>UBIQUITINATION</scope>
</reference>
<reference key="17">
    <citation type="journal article" date="2011" name="Cell">
        <title>Identification of 67 histone marks and histone lysine crotonylation as a new type of histone modification.</title>
        <authorList>
            <person name="Tan M."/>
            <person name="Luo H."/>
            <person name="Lee S."/>
            <person name="Jin F."/>
            <person name="Yang J.S."/>
            <person name="Montellier E."/>
            <person name="Buchou T."/>
            <person name="Cheng Z."/>
            <person name="Rousseaux S."/>
            <person name="Rajagopal N."/>
            <person name="Lu Z."/>
            <person name="Ye Z."/>
            <person name="Zhu Q."/>
            <person name="Wysocka J."/>
            <person name="Ye Y."/>
            <person name="Khochbin S."/>
            <person name="Ren B."/>
            <person name="Zhao Y."/>
        </authorList>
    </citation>
    <scope>CROTONYLATION AT LYS-37; LYS-119; LYS-120 AND LYS-126</scope>
</reference>
<reference key="18">
    <citation type="journal article" date="2012" name="Cell">
        <title>RNF168 ubiquitinates K13-15 on H2A/H2AX to drive DNA Damage signaling.</title>
        <authorList>
            <person name="Mattiroli F."/>
            <person name="Vissers J.H."/>
            <person name="van Dijk W.J."/>
            <person name="Ikpa P."/>
            <person name="Citterio E."/>
            <person name="Vermeulen W."/>
            <person name="Marteijn J.A."/>
            <person name="Sixma T.K."/>
        </authorList>
    </citation>
    <scope>UBIQUITINATION AT LYS-14 AND LYS-16 BY RNF168</scope>
</reference>
<reference key="19">
    <citation type="journal article" date="2012" name="Cell Cycle">
        <title>A novel ubiquitin mark at the N-terminal tail of histone H2As targeted by RNF168 ubiquitin ligase.</title>
        <authorList>
            <person name="Gatti M."/>
            <person name="Pinato S."/>
            <person name="Maspero E."/>
            <person name="Soffientini P."/>
            <person name="Polo S."/>
            <person name="Penengo L."/>
        </authorList>
    </citation>
    <scope>UBIQUITINATION AT LYS-14 AND LYS-16 BY RNF168</scope>
</reference>
<reference key="20">
    <citation type="journal article" date="2012" name="Mol. Cell. Proteomics">
        <title>Lysine succinylation and lysine malonylation in histones.</title>
        <authorList>
            <person name="Xie Z."/>
            <person name="Dai J."/>
            <person name="Dai L."/>
            <person name="Tan M."/>
            <person name="Cheng Z."/>
            <person name="Wu Y."/>
            <person name="Boeke J.D."/>
            <person name="Zhao Y."/>
        </authorList>
    </citation>
    <scope>SUCCINYLATION AT LYS-10 AND LYS-96</scope>
</reference>
<reference key="21">
    <citation type="journal article" date="2013" name="Mol. Cell">
        <title>VprBP has intrinsic kinase activity targeting histone H2A and represses gene transcription.</title>
        <authorList>
            <person name="Kim K."/>
            <person name="Kim J.M."/>
            <person name="Kim J.S."/>
            <person name="Choi J."/>
            <person name="Lee Y.S."/>
            <person name="Neamati N."/>
            <person name="Song J.S."/>
            <person name="Heo K."/>
            <person name="An W."/>
        </authorList>
    </citation>
    <scope>PHOSPHORYLATION AT THR-121</scope>
</reference>
<reference key="22">
    <citation type="journal article" date="2014" name="Nat. Chem. Biol.">
        <title>Lysine 2-hydroxyisobutyrylation is a widely distributed active histone mark.</title>
        <authorList>
            <person name="Dai L."/>
            <person name="Peng C."/>
            <person name="Montellier E."/>
            <person name="Lu Z."/>
            <person name="Chen Y."/>
            <person name="Ishii H."/>
            <person name="Debernardi A."/>
            <person name="Buchou T."/>
            <person name="Rousseaux S."/>
            <person name="Jin F."/>
            <person name="Sabari B.R."/>
            <person name="Deng Z."/>
            <person name="Allis C.D."/>
            <person name="Ren B."/>
            <person name="Khochbin S."/>
            <person name="Zhao Y."/>
        </authorList>
    </citation>
    <scope>HYDROXYBUTYRYLATION AT LYS-6; LYS-10; LYS-37; LYS-75; LYS-76; LYS-96 AND LYS-119</scope>
</reference>
<reference key="23">
    <citation type="journal article" date="2014" name="Nature">
        <title>Glutamine methylation in histone H2A is an RNA-polymerase-I-dedicated modification.</title>
        <authorList>
            <person name="Tessarz P."/>
            <person name="Santos-Rosa H."/>
            <person name="Robson S.C."/>
            <person name="Sylvestersen K.B."/>
            <person name="Nelson C.J."/>
            <person name="Nielsen M.L."/>
            <person name="Kouzarides T."/>
        </authorList>
    </citation>
    <scope>METHYLATION AT GLN-105</scope>
</reference>
<reference key="24">
    <citation type="journal article" date="2014" name="Nature">
        <title>TRIM37 is a new histone H2A ubiquitin ligase and breast cancer oncoprotein.</title>
        <authorList>
            <person name="Bhatnagar S."/>
            <person name="Gazin C."/>
            <person name="Chamberlain L."/>
            <person name="Ou J."/>
            <person name="Zhu X."/>
            <person name="Tushir J.S."/>
            <person name="Virbasius C.M."/>
            <person name="Lin L."/>
            <person name="Zhu L.J."/>
            <person name="Wajapeyee N."/>
            <person name="Green M.R."/>
        </authorList>
    </citation>
    <scope>UBIQUITINATION AT LYS-120</scope>
</reference>
<reference key="25">
    <citation type="journal article" date="2016" name="Genes Dev.">
        <title>USP51 deubiquitylates H2AK13,15ub and regulates DNA damage response.</title>
        <authorList>
            <person name="Wang Z."/>
            <person name="Zhang H."/>
            <person name="Liu J."/>
            <person name="Cheruiyot A."/>
            <person name="Lee J.H."/>
            <person name="Ordog T."/>
            <person name="Lou Z."/>
            <person name="You Z."/>
            <person name="Zhang Z."/>
        </authorList>
    </citation>
    <scope>DEUBIQUITINATION AT LYS-14 AND LYS-16 BY USP51</scope>
</reference>
<reference key="26">
    <citation type="journal article" date="2016" name="Mol. Cell">
        <title>Metabolic regulation of gene expression by histone lysine beta-hydroxybutyrylation.</title>
        <authorList>
            <person name="Xie Z."/>
            <person name="Zhang D."/>
            <person name="Chung D."/>
            <person name="Tang Z."/>
            <person name="Huang H."/>
            <person name="Dai L."/>
            <person name="Qi S."/>
            <person name="Li J."/>
            <person name="Colak G."/>
            <person name="Chen Y."/>
            <person name="Xia C."/>
            <person name="Peng C."/>
            <person name="Ruan H."/>
            <person name="Kirkey M."/>
            <person name="Wang D."/>
            <person name="Jensen L.M."/>
            <person name="Kwon O.K."/>
            <person name="Lee S."/>
            <person name="Pletcher S.D."/>
            <person name="Tan M."/>
            <person name="Lombard D.B."/>
            <person name="White K.P."/>
            <person name="Zhao H."/>
            <person name="Li J."/>
            <person name="Roeder R.G."/>
            <person name="Yang X."/>
            <person name="Zhao Y."/>
        </authorList>
    </citation>
    <scope>HYDROXYBUTYRYLATION AT LYS-10; LYS-14; LYS-37; LYS-96 AND LYS-119</scope>
</reference>
<reference key="27">
    <citation type="journal article" date="2019" name="Mol. Cell">
        <title>Glutarylation of histone H4 lysine 91 regulates chromatin dynamics.</title>
        <authorList>
            <person name="Bao X."/>
            <person name="Liu Z."/>
            <person name="Zhang W."/>
            <person name="Gladysz K."/>
            <person name="Fung Y.M.E."/>
            <person name="Tian G."/>
            <person name="Xiong Y."/>
            <person name="Wong J.W.H."/>
            <person name="Yuen K.W.Y."/>
            <person name="Li X.D."/>
        </authorList>
    </citation>
    <scope>GLUTARYLATION AT LYS-96; LYS-119; LYS-120 AND LYS-126</scope>
</reference>
<reference evidence="30" key="28">
    <citation type="journal article" date="2020" name="Nature">
        <title>Structural basis for sequestration and autoinhibition of cGAS by chromatin.</title>
        <authorList>
            <person name="Michalski S."/>
            <person name="de Oliveira Mann C.C."/>
            <person name="Stafford C.A."/>
            <person name="Witte G."/>
            <person name="Bartho J."/>
            <person name="Lammens K."/>
            <person name="Hornung V."/>
            <person name="Hopfner K.P."/>
        </authorList>
    </citation>
    <scope>STRUCTURE BY ELECTRON MICROSCOPY (3.11 ANGSTROMS) OF 2-130 IN COMPLEX WITH NUCLEOSOME CORE AND CGAS</scope>
</reference>
<evidence type="ECO:0000250" key="1">
    <source>
        <dbReference type="UniProtKB" id="C0HKE2"/>
    </source>
</evidence>
<evidence type="ECO:0000250" key="2">
    <source>
        <dbReference type="UniProtKB" id="P0C0S5"/>
    </source>
</evidence>
<evidence type="ECO:0000250" key="3">
    <source>
        <dbReference type="UniProtKB" id="P0C169"/>
    </source>
</evidence>
<evidence type="ECO:0000250" key="4">
    <source>
        <dbReference type="UniProtKB" id="P22752"/>
    </source>
</evidence>
<evidence type="ECO:0000256" key="5">
    <source>
        <dbReference type="SAM" id="MobiDB-lite"/>
    </source>
</evidence>
<evidence type="ECO:0000269" key="6">
    <source>
    </source>
</evidence>
<evidence type="ECO:0000269" key="7">
    <source>
    </source>
</evidence>
<evidence type="ECO:0000269" key="8">
    <source>
    </source>
</evidence>
<evidence type="ECO:0000269" key="9">
    <source>
    </source>
</evidence>
<evidence type="ECO:0000269" key="10">
    <source>
    </source>
</evidence>
<evidence type="ECO:0000269" key="11">
    <source>
    </source>
</evidence>
<evidence type="ECO:0000269" key="12">
    <source>
    </source>
</evidence>
<evidence type="ECO:0000269" key="13">
    <source>
    </source>
</evidence>
<evidence type="ECO:0000269" key="14">
    <source>
    </source>
</evidence>
<evidence type="ECO:0000269" key="15">
    <source>
    </source>
</evidence>
<evidence type="ECO:0000269" key="16">
    <source>
    </source>
</evidence>
<evidence type="ECO:0000269" key="17">
    <source>
    </source>
</evidence>
<evidence type="ECO:0000269" key="18">
    <source>
    </source>
</evidence>
<evidence type="ECO:0000269" key="19">
    <source>
    </source>
</evidence>
<evidence type="ECO:0000269" key="20">
    <source>
    </source>
</evidence>
<evidence type="ECO:0000269" key="21">
    <source>
    </source>
</evidence>
<evidence type="ECO:0000269" key="22">
    <source>
    </source>
</evidence>
<evidence type="ECO:0000269" key="23">
    <source>
    </source>
</evidence>
<evidence type="ECO:0000269" key="24">
    <source>
    </source>
</evidence>
<evidence type="ECO:0000269" key="25">
    <source>
    </source>
</evidence>
<evidence type="ECO:0000269" key="26">
    <source>
    </source>
</evidence>
<evidence type="ECO:0000269" key="27">
    <source>
    </source>
</evidence>
<evidence type="ECO:0000305" key="28"/>
<evidence type="ECO:0000312" key="29">
    <source>
        <dbReference type="HGNC" id="HGNC:4733"/>
    </source>
</evidence>
<evidence type="ECO:0007744" key="30">
    <source>
        <dbReference type="PDB" id="7A08"/>
    </source>
</evidence>
<evidence type="ECO:0007829" key="31">
    <source>
        <dbReference type="PDB" id="7R5R"/>
    </source>
</evidence>
<evidence type="ECO:0007829" key="32">
    <source>
        <dbReference type="PDB" id="8OX0"/>
    </source>
</evidence>
<feature type="initiator methionine" description="Removed" evidence="3">
    <location>
        <position position="1"/>
    </location>
</feature>
<feature type="chain" id="PRO_0000055236" description="Histone H2A type 1-C">
    <location>
        <begin position="2"/>
        <end position="130"/>
    </location>
</feature>
<feature type="region of interest" description="Disordered" evidence="5">
    <location>
        <begin position="1"/>
        <end position="22"/>
    </location>
</feature>
<feature type="compositionally biased region" description="Basic residues" evidence="5">
    <location>
        <begin position="7"/>
        <end position="19"/>
    </location>
</feature>
<feature type="modified residue" description="N-acetylserine" evidence="9 11">
    <location>
        <position position="2"/>
    </location>
</feature>
<feature type="modified residue" description="Phosphoserine; by RPS6KA5" evidence="6">
    <location>
        <position position="2"/>
    </location>
</feature>
<feature type="modified residue" description="Citrulline; alternate" evidence="9">
    <location>
        <position position="4"/>
    </location>
</feature>
<feature type="modified residue" description="Symmetric dimethylarginine; by PRMT5; alternate" evidence="1">
    <location>
        <position position="4"/>
    </location>
</feature>
<feature type="modified residue" description="N6-(2-hydroxyisobutyryl)lysine; alternate" evidence="23">
    <location>
        <position position="6"/>
    </location>
</feature>
<feature type="modified residue" description="N6-acetyllysine; alternate" evidence="1">
    <location>
        <position position="6"/>
    </location>
</feature>
<feature type="modified residue" description="N6-(2-hydroxyisobutyryl)lysine; alternate" evidence="23">
    <location>
        <position position="10"/>
    </location>
</feature>
<feature type="modified residue" description="N6-(beta-hydroxybutyryl)lysine; alternate" evidence="26">
    <location>
        <position position="10"/>
    </location>
</feature>
<feature type="modified residue" description="N6-lactoyllysine; alternate" evidence="2">
    <location>
        <position position="10"/>
    </location>
</feature>
<feature type="modified residue" description="N6-succinyllysine; alternate" evidence="18">
    <location>
        <position position="10"/>
    </location>
</feature>
<feature type="modified residue" description="N6-(beta-hydroxybutyryl)lysine; alternate" evidence="26">
    <location>
        <position position="14"/>
    </location>
</feature>
<feature type="modified residue" description="N6-(2-hydroxyisobutyryl)lysine; alternate" evidence="23">
    <location>
        <position position="37"/>
    </location>
</feature>
<feature type="modified residue" description="N6-(beta-hydroxybutyryl)lysine; alternate" evidence="26">
    <location>
        <position position="37"/>
    </location>
</feature>
<feature type="modified residue" description="N6-crotonyllysine; alternate" evidence="17">
    <location>
        <position position="37"/>
    </location>
</feature>
<feature type="modified residue" description="N6-(2-hydroxyisobutyryl)lysine" evidence="23">
    <location>
        <position position="75"/>
    </location>
</feature>
<feature type="modified residue" description="N6-(2-hydroxyisobutyryl)lysine" evidence="23">
    <location>
        <position position="76"/>
    </location>
</feature>
<feature type="modified residue" description="N6-(2-hydroxyisobutyryl)lysine; alternate" evidence="23">
    <location>
        <position position="96"/>
    </location>
</feature>
<feature type="modified residue" description="N6-(beta-hydroxybutyryl)lysine; alternate" evidence="26">
    <location>
        <position position="96"/>
    </location>
</feature>
<feature type="modified residue" description="N6-glutaryllysine; alternate" evidence="27">
    <location>
        <position position="96"/>
    </location>
</feature>
<feature type="modified residue" description="N6-succinyllysine; alternate" evidence="18">
    <location>
        <position position="96"/>
    </location>
</feature>
<feature type="modified residue" description="N5-methylglutamine" evidence="22">
    <location>
        <position position="105"/>
    </location>
</feature>
<feature type="modified residue" description="N6-(2-hydroxyisobutyryl)lysine; alternate" evidence="23">
    <location>
        <position position="119"/>
    </location>
</feature>
<feature type="modified residue" description="N6-(beta-hydroxybutyryl)lysine; alternate" evidence="26">
    <location>
        <position position="119"/>
    </location>
</feature>
<feature type="modified residue" description="N6-crotonyllysine; alternate" evidence="17">
    <location>
        <position position="119"/>
    </location>
</feature>
<feature type="modified residue" description="N6-glutaryllysine; alternate" evidence="27">
    <location>
        <position position="119"/>
    </location>
</feature>
<feature type="modified residue" description="N6-crotonyllysine; alternate" evidence="17">
    <location>
        <position position="120"/>
    </location>
</feature>
<feature type="modified residue" description="N6-glutaryllysine; alternate" evidence="27">
    <location>
        <position position="120"/>
    </location>
</feature>
<feature type="modified residue" description="Phosphothreonine; by DCAF1" evidence="7 21">
    <location>
        <position position="121"/>
    </location>
</feature>
<feature type="modified residue" description="N6-crotonyllysine; alternate" evidence="17">
    <location>
        <position position="126"/>
    </location>
</feature>
<feature type="modified residue" description="N6-glutaryllysine; alternate" evidence="27">
    <location>
        <position position="126"/>
    </location>
</feature>
<feature type="cross-link" description="Glycyl lysine isopeptide (Lys-Gly) (interchain with G-Cter in ubiquitin); alternate" evidence="19 20">
    <location>
        <position position="14"/>
    </location>
</feature>
<feature type="cross-link" description="Glycyl lysine isopeptide (Lys-Gly) (interchain with G-Cter in ubiquitin)" evidence="19 20">
    <location>
        <position position="16"/>
    </location>
</feature>
<feature type="cross-link" description="Glycyl lysine isopeptide (Lys-Gly) (interchain with G-Cter in ubiquitin); alternate" evidence="8 10 12 24">
    <location>
        <position position="120"/>
    </location>
</feature>
<feature type="mutagenesis site" description="Blocks the inhibition of transcription by RPS6KA5/MSK1." evidence="6">
    <original>S</original>
    <variation>A</variation>
    <location>
        <position position="2"/>
    </location>
</feature>
<feature type="helix" evidence="31">
    <location>
        <begin position="18"/>
        <end position="21"/>
    </location>
</feature>
<feature type="helix" evidence="31">
    <location>
        <begin position="29"/>
        <end position="36"/>
    </location>
</feature>
<feature type="turn" evidence="31">
    <location>
        <begin position="37"/>
        <end position="39"/>
    </location>
</feature>
<feature type="strand" evidence="31">
    <location>
        <begin position="42"/>
        <end position="44"/>
    </location>
</feature>
<feature type="helix" evidence="31">
    <location>
        <begin position="48"/>
        <end position="72"/>
    </location>
</feature>
<feature type="turn" evidence="31">
    <location>
        <begin position="73"/>
        <end position="75"/>
    </location>
</feature>
<feature type="strand" evidence="31">
    <location>
        <begin position="77"/>
        <end position="79"/>
    </location>
</feature>
<feature type="helix" evidence="31">
    <location>
        <begin position="81"/>
        <end position="89"/>
    </location>
</feature>
<feature type="helix" evidence="31">
    <location>
        <begin position="92"/>
        <end position="97"/>
    </location>
</feature>
<feature type="turn" evidence="31">
    <location>
        <begin position="98"/>
        <end position="100"/>
    </location>
</feature>
<feature type="strand" evidence="32">
    <location>
        <begin position="101"/>
        <end position="103"/>
    </location>
</feature>
<feature type="turn" evidence="31">
    <location>
        <begin position="114"/>
        <end position="116"/>
    </location>
</feature>
<sequence>MSGRGKQGGKARAKAKSRSSRAGLQFPVGRVHRLLRKGNYAERVGAGAPVYLAAVLEYLTAEILELAGNAARDNKKTRIIPRHLQLAIRNDEELNKLLGRVTIAQGGVLPNIQAVLLPKKTESHHKAKGK</sequence>